<name>NMT_ASPFU</name>
<proteinExistence type="evidence at protein level"/>
<accession>Q9UVX3</accession>
<accession>Q4WP53</accession>
<protein>
    <recommendedName>
        <fullName>Glycylpeptide N-tetradecanoyltransferase</fullName>
        <ecNumber>2.3.1.97</ecNumber>
    </recommendedName>
    <alternativeName>
        <fullName>Myristoyl-CoA:protein N-myristoyltransferase</fullName>
        <shortName>NMT</shortName>
    </alternativeName>
    <alternativeName>
        <fullName>Peptide N-myristoyltransferase</fullName>
    </alternativeName>
</protein>
<sequence length="492" mass="56255">MSDSKDRKGKAPEGQSSEKKDGAVNITPQMAESLLENNPALRNETAGMDKDKAAEAMRKMNIAELLTGLSVSGKNQKDMASYKFWQTQPVPRFDETSTDTGGPIKIIDPEKVSKEPDALLEGFEWATLDLTNETELQELWDLLTYHYVEDDNAMFRFRYSQSFLHWALMSPGWKKEWHVGVRATKSRKLVASICGVPTEINVRNQKLKVVEINFLCIHKKLRSKRLTPVLIKEITRRCYLNGIYQAIYTAGVVLPTPVSSCRYYHRPLDWLKLYEVGFSPLPAGSTKARQITKNHLPSTTSTPGLRPMEPKDIDTVHDLLQRYLSRFALNQAFTREEVDHWLVHKPETVKEQVVWAYVVEDPETHKITDFFSFYNLESTVIQNPKHDNVRAAYLYYYATETAFTNNMKALKERLLMLMNDALILAKKAHFDVFNALTLHDNPLFLEQLKFGAGDGQLHFYLYNYRTAPVPGGVNEKNLPDEKRMGGVGIVML</sequence>
<organism>
    <name type="scientific">Aspergillus fumigatus (strain ATCC MYA-4609 / CBS 101355 / FGSC A1100 / Af293)</name>
    <name type="common">Neosartorya fumigata</name>
    <dbReference type="NCBI Taxonomy" id="330879"/>
    <lineage>
        <taxon>Eukaryota</taxon>
        <taxon>Fungi</taxon>
        <taxon>Dikarya</taxon>
        <taxon>Ascomycota</taxon>
        <taxon>Pezizomycotina</taxon>
        <taxon>Eurotiomycetes</taxon>
        <taxon>Eurotiomycetidae</taxon>
        <taxon>Eurotiales</taxon>
        <taxon>Aspergillaceae</taxon>
        <taxon>Aspergillus</taxon>
        <taxon>Aspergillus subgen. Fumigati</taxon>
    </lineage>
</organism>
<keyword id="KW-0002">3D-structure</keyword>
<keyword id="KW-0012">Acyltransferase</keyword>
<keyword id="KW-0963">Cytoplasm</keyword>
<keyword id="KW-1185">Reference proteome</keyword>
<keyword id="KW-0808">Transferase</keyword>
<evidence type="ECO:0000250" key="1"/>
<evidence type="ECO:0000250" key="2">
    <source>
        <dbReference type="UniProtKB" id="P14743"/>
    </source>
</evidence>
<evidence type="ECO:0000256" key="3">
    <source>
        <dbReference type="SAM" id="MobiDB-lite"/>
    </source>
</evidence>
<evidence type="ECO:0000305" key="4"/>
<evidence type="ECO:0007829" key="5">
    <source>
        <dbReference type="PDB" id="4CAV"/>
    </source>
</evidence>
<evidence type="ECO:0007829" key="6">
    <source>
        <dbReference type="PDB" id="4CAW"/>
    </source>
</evidence>
<evidence type="ECO:0007829" key="7">
    <source>
        <dbReference type="PDB" id="4CAX"/>
    </source>
</evidence>
<evidence type="ECO:0007829" key="8">
    <source>
        <dbReference type="PDB" id="4UWJ"/>
    </source>
</evidence>
<evidence type="ECO:0007829" key="9">
    <source>
        <dbReference type="PDB" id="5T5U"/>
    </source>
</evidence>
<comment type="function">
    <text>Adds a myristoyl group to the N-terminal glycine residue of certain cellular proteins.</text>
</comment>
<comment type="catalytic activity">
    <reaction>
        <text>N-terminal glycyl-[protein] + tetradecanoyl-CoA = N-tetradecanoylglycyl-[protein] + CoA + H(+)</text>
        <dbReference type="Rhea" id="RHEA:15521"/>
        <dbReference type="Rhea" id="RHEA-COMP:12666"/>
        <dbReference type="Rhea" id="RHEA-COMP:12667"/>
        <dbReference type="ChEBI" id="CHEBI:15378"/>
        <dbReference type="ChEBI" id="CHEBI:57287"/>
        <dbReference type="ChEBI" id="CHEBI:57385"/>
        <dbReference type="ChEBI" id="CHEBI:64723"/>
        <dbReference type="ChEBI" id="CHEBI:133050"/>
        <dbReference type="EC" id="2.3.1.97"/>
    </reaction>
</comment>
<comment type="subunit">
    <text evidence="1">Monomer.</text>
</comment>
<comment type="subcellular location">
    <subcellularLocation>
        <location>Cytoplasm</location>
    </subcellularLocation>
</comment>
<comment type="similarity">
    <text evidence="4">Belongs to the NMT family.</text>
</comment>
<feature type="chain" id="PRO_0000064235" description="Glycylpeptide N-tetradecanoyltransferase">
    <location>
        <begin position="1"/>
        <end position="492"/>
    </location>
</feature>
<feature type="region of interest" description="Disordered" evidence="3">
    <location>
        <begin position="1"/>
        <end position="45"/>
    </location>
</feature>
<feature type="compositionally biased region" description="Basic and acidic residues" evidence="3">
    <location>
        <begin position="1"/>
        <end position="22"/>
    </location>
</feature>
<feature type="active site" description="Proton acceptor; via carboxylate" evidence="1">
    <location>
        <position position="492"/>
    </location>
</feature>
<feature type="binding site" evidence="2">
    <location>
        <begin position="82"/>
        <end position="85"/>
    </location>
    <ligand>
        <name>tetradecanoyl-CoA</name>
        <dbReference type="ChEBI" id="CHEBI:57385"/>
    </ligand>
</feature>
<feature type="binding site" evidence="2">
    <location>
        <begin position="215"/>
        <end position="217"/>
    </location>
    <ligand>
        <name>tetradecanoyl-CoA</name>
        <dbReference type="ChEBI" id="CHEBI:57385"/>
    </ligand>
</feature>
<feature type="binding site" evidence="2">
    <location>
        <begin position="223"/>
        <end position="227"/>
    </location>
    <ligand>
        <name>tetradecanoyl-CoA</name>
        <dbReference type="ChEBI" id="CHEBI:57385"/>
    </ligand>
</feature>
<feature type="strand" evidence="8">
    <location>
        <begin position="102"/>
        <end position="104"/>
    </location>
</feature>
<feature type="helix" evidence="8">
    <location>
        <begin position="109"/>
        <end position="111"/>
    </location>
</feature>
<feature type="strand" evidence="8">
    <location>
        <begin position="123"/>
        <end position="127"/>
    </location>
</feature>
<feature type="helix" evidence="8">
    <location>
        <begin position="133"/>
        <end position="146"/>
    </location>
</feature>
<feature type="strand" evidence="5">
    <location>
        <begin position="147"/>
        <end position="150"/>
    </location>
</feature>
<feature type="strand" evidence="8">
    <location>
        <begin position="155"/>
        <end position="158"/>
    </location>
</feature>
<feature type="helix" evidence="8">
    <location>
        <begin position="161"/>
        <end position="168"/>
    </location>
</feature>
<feature type="helix" evidence="8">
    <location>
        <begin position="175"/>
        <end position="177"/>
    </location>
</feature>
<feature type="strand" evidence="8">
    <location>
        <begin position="178"/>
        <end position="183"/>
    </location>
</feature>
<feature type="turn" evidence="8">
    <location>
        <begin position="184"/>
        <end position="186"/>
    </location>
</feature>
<feature type="strand" evidence="8">
    <location>
        <begin position="189"/>
        <end position="202"/>
    </location>
</feature>
<feature type="strand" evidence="8">
    <location>
        <begin position="205"/>
        <end position="217"/>
    </location>
</feature>
<feature type="helix" evidence="8">
    <location>
        <begin position="219"/>
        <end position="221"/>
    </location>
</feature>
<feature type="strand" evidence="6">
    <location>
        <begin position="223"/>
        <end position="225"/>
    </location>
</feature>
<feature type="helix" evidence="8">
    <location>
        <begin position="226"/>
        <end position="240"/>
    </location>
</feature>
<feature type="strand" evidence="8">
    <location>
        <begin position="246"/>
        <end position="252"/>
    </location>
</feature>
<feature type="strand" evidence="8">
    <location>
        <begin position="258"/>
        <end position="269"/>
    </location>
</feature>
<feature type="helix" evidence="8">
    <location>
        <begin position="270"/>
        <end position="275"/>
    </location>
</feature>
<feature type="helix" evidence="8">
    <location>
        <begin position="287"/>
        <end position="293"/>
    </location>
</feature>
<feature type="strand" evidence="8">
    <location>
        <begin position="305"/>
        <end position="307"/>
    </location>
</feature>
<feature type="helix" evidence="8">
    <location>
        <begin position="310"/>
        <end position="312"/>
    </location>
</feature>
<feature type="helix" evidence="8">
    <location>
        <begin position="313"/>
        <end position="324"/>
    </location>
</feature>
<feature type="strand" evidence="8">
    <location>
        <begin position="327"/>
        <end position="331"/>
    </location>
</feature>
<feature type="helix" evidence="8">
    <location>
        <begin position="335"/>
        <end position="342"/>
    </location>
</feature>
<feature type="turn" evidence="8">
    <location>
        <begin position="346"/>
        <end position="348"/>
    </location>
</feature>
<feature type="strand" evidence="8">
    <location>
        <begin position="354"/>
        <end position="360"/>
    </location>
</feature>
<feature type="turn" evidence="8">
    <location>
        <begin position="362"/>
        <end position="364"/>
    </location>
</feature>
<feature type="strand" evidence="8">
    <location>
        <begin position="366"/>
        <end position="382"/>
    </location>
</feature>
<feature type="strand" evidence="8">
    <location>
        <begin position="387"/>
        <end position="399"/>
    </location>
</feature>
<feature type="helix" evidence="8">
    <location>
        <begin position="400"/>
        <end position="404"/>
    </location>
</feature>
<feature type="helix" evidence="8">
    <location>
        <begin position="407"/>
        <end position="427"/>
    </location>
</feature>
<feature type="strand" evidence="8">
    <location>
        <begin position="431"/>
        <end position="437"/>
    </location>
</feature>
<feature type="helix" evidence="8">
    <location>
        <begin position="441"/>
        <end position="443"/>
    </location>
</feature>
<feature type="turn" evidence="8">
    <location>
        <begin position="444"/>
        <end position="449"/>
    </location>
</feature>
<feature type="strand" evidence="8">
    <location>
        <begin position="451"/>
        <end position="465"/>
    </location>
</feature>
<feature type="strand" evidence="7">
    <location>
        <begin position="477"/>
        <end position="479"/>
    </location>
</feature>
<feature type="helix" evidence="9">
    <location>
        <begin position="481"/>
        <end position="483"/>
    </location>
</feature>
<feature type="strand" evidence="8">
    <location>
        <begin position="485"/>
        <end position="488"/>
    </location>
</feature>
<reference key="1">
    <citation type="submission" date="1999-12" db="EMBL/GenBank/DDBJ databases">
        <title>N-myristoyl transferase.</title>
        <authorList>
            <person name="Sakata K."/>
            <person name="Hashido K."/>
            <person name="Aoki Y."/>
            <person name="Arisawa M."/>
        </authorList>
    </citation>
    <scope>NUCLEOTIDE SEQUENCE [MRNA]</scope>
</reference>
<reference key="2">
    <citation type="journal article" date="2005" name="Nature">
        <title>Genomic sequence of the pathogenic and allergenic filamentous fungus Aspergillus fumigatus.</title>
        <authorList>
            <person name="Nierman W.C."/>
            <person name="Pain A."/>
            <person name="Anderson M.J."/>
            <person name="Wortman J.R."/>
            <person name="Kim H.S."/>
            <person name="Arroyo J."/>
            <person name="Berriman M."/>
            <person name="Abe K."/>
            <person name="Archer D.B."/>
            <person name="Bermejo C."/>
            <person name="Bennett J.W."/>
            <person name="Bowyer P."/>
            <person name="Chen D."/>
            <person name="Collins M."/>
            <person name="Coulsen R."/>
            <person name="Davies R."/>
            <person name="Dyer P.S."/>
            <person name="Farman M.L."/>
            <person name="Fedorova N."/>
            <person name="Fedorova N.D."/>
            <person name="Feldblyum T.V."/>
            <person name="Fischer R."/>
            <person name="Fosker N."/>
            <person name="Fraser A."/>
            <person name="Garcia J.L."/>
            <person name="Garcia M.J."/>
            <person name="Goble A."/>
            <person name="Goldman G.H."/>
            <person name="Gomi K."/>
            <person name="Griffith-Jones S."/>
            <person name="Gwilliam R."/>
            <person name="Haas B.J."/>
            <person name="Haas H."/>
            <person name="Harris D.E."/>
            <person name="Horiuchi H."/>
            <person name="Huang J."/>
            <person name="Humphray S."/>
            <person name="Jimenez J."/>
            <person name="Keller N."/>
            <person name="Khouri H."/>
            <person name="Kitamoto K."/>
            <person name="Kobayashi T."/>
            <person name="Konzack S."/>
            <person name="Kulkarni R."/>
            <person name="Kumagai T."/>
            <person name="Lafton A."/>
            <person name="Latge J.-P."/>
            <person name="Li W."/>
            <person name="Lord A."/>
            <person name="Lu C."/>
            <person name="Majoros W.H."/>
            <person name="May G.S."/>
            <person name="Miller B.L."/>
            <person name="Mohamoud Y."/>
            <person name="Molina M."/>
            <person name="Monod M."/>
            <person name="Mouyna I."/>
            <person name="Mulligan S."/>
            <person name="Murphy L.D."/>
            <person name="O'Neil S."/>
            <person name="Paulsen I."/>
            <person name="Penalva M.A."/>
            <person name="Pertea M."/>
            <person name="Price C."/>
            <person name="Pritchard B.L."/>
            <person name="Quail M.A."/>
            <person name="Rabbinowitsch E."/>
            <person name="Rawlins N."/>
            <person name="Rajandream M.A."/>
            <person name="Reichard U."/>
            <person name="Renauld H."/>
            <person name="Robson G.D."/>
            <person name="Rodriguez de Cordoba S."/>
            <person name="Rodriguez-Pena J.M."/>
            <person name="Ronning C.M."/>
            <person name="Rutter S."/>
            <person name="Salzberg S.L."/>
            <person name="Sanchez M."/>
            <person name="Sanchez-Ferrero J.C."/>
            <person name="Saunders D."/>
            <person name="Seeger K."/>
            <person name="Squares R."/>
            <person name="Squares S."/>
            <person name="Takeuchi M."/>
            <person name="Tekaia F."/>
            <person name="Turner G."/>
            <person name="Vazquez de Aldana C.R."/>
            <person name="Weidman J."/>
            <person name="White O."/>
            <person name="Woodward J.R."/>
            <person name="Yu J.-H."/>
            <person name="Fraser C.M."/>
            <person name="Galagan J.E."/>
            <person name="Asai K."/>
            <person name="Machida M."/>
            <person name="Hall N."/>
            <person name="Barrell B.G."/>
            <person name="Denning D.W."/>
        </authorList>
    </citation>
    <scope>NUCLEOTIDE SEQUENCE [LARGE SCALE GENOMIC DNA]</scope>
    <source>
        <strain>ATCC MYA-4609 / CBS 101355 / FGSC A1100 / Af293</strain>
    </source>
</reference>
<dbReference type="EC" id="2.3.1.97"/>
<dbReference type="EMBL" id="AB035414">
    <property type="protein sequence ID" value="BAA87865.1"/>
    <property type="molecule type" value="mRNA"/>
</dbReference>
<dbReference type="EMBL" id="AAHF01000005">
    <property type="protein sequence ID" value="EAL89981.1"/>
    <property type="molecule type" value="Genomic_DNA"/>
</dbReference>
<dbReference type="RefSeq" id="XP_752019.1">
    <property type="nucleotide sequence ID" value="XM_746926.1"/>
</dbReference>
<dbReference type="PDB" id="4CAV">
    <property type="method" value="X-ray"/>
    <property type="resolution" value="1.89 A"/>
    <property type="chains" value="A=86-492"/>
</dbReference>
<dbReference type="PDB" id="4CAW">
    <property type="method" value="X-ray"/>
    <property type="resolution" value="2.50 A"/>
    <property type="chains" value="A=86-492"/>
</dbReference>
<dbReference type="PDB" id="4CAX">
    <property type="method" value="X-ray"/>
    <property type="resolution" value="1.85 A"/>
    <property type="chains" value="A=86-492"/>
</dbReference>
<dbReference type="PDB" id="4QBJ">
    <property type="method" value="X-ray"/>
    <property type="resolution" value="2.10 A"/>
    <property type="chains" value="A=101-492"/>
</dbReference>
<dbReference type="PDB" id="4UWI">
    <property type="method" value="X-ray"/>
    <property type="resolution" value="1.80 A"/>
    <property type="chains" value="A=86-492"/>
</dbReference>
<dbReference type="PDB" id="4UWJ">
    <property type="method" value="X-ray"/>
    <property type="resolution" value="1.70 A"/>
    <property type="chains" value="A=86-492"/>
</dbReference>
<dbReference type="PDB" id="5T5U">
    <property type="method" value="X-ray"/>
    <property type="resolution" value="1.80 A"/>
    <property type="chains" value="A=86-492"/>
</dbReference>
<dbReference type="PDB" id="5T6C">
    <property type="method" value="X-ray"/>
    <property type="resolution" value="1.90 A"/>
    <property type="chains" value="A=86-492"/>
</dbReference>
<dbReference type="PDB" id="5T6E">
    <property type="method" value="X-ray"/>
    <property type="resolution" value="2.30 A"/>
    <property type="chains" value="A=86-492"/>
</dbReference>
<dbReference type="PDB" id="5T6H">
    <property type="method" value="X-ray"/>
    <property type="resolution" value="1.80 A"/>
    <property type="chains" value="A=86-492"/>
</dbReference>
<dbReference type="PDBsum" id="4CAV"/>
<dbReference type="PDBsum" id="4CAW"/>
<dbReference type="PDBsum" id="4CAX"/>
<dbReference type="PDBsum" id="4QBJ"/>
<dbReference type="PDBsum" id="4UWI"/>
<dbReference type="PDBsum" id="4UWJ"/>
<dbReference type="PDBsum" id="5T5U"/>
<dbReference type="PDBsum" id="5T6C"/>
<dbReference type="PDBsum" id="5T6E"/>
<dbReference type="PDBsum" id="5T6H"/>
<dbReference type="SMR" id="Q9UVX3"/>
<dbReference type="FunCoup" id="Q9UVX3">
    <property type="interactions" value="949"/>
</dbReference>
<dbReference type="STRING" id="330879.Q9UVX3"/>
<dbReference type="BindingDB" id="Q9UVX3"/>
<dbReference type="ChEMBL" id="CHEMBL3988591"/>
<dbReference type="EnsemblFungi" id="EAL89981">
    <property type="protein sequence ID" value="EAL89981"/>
    <property type="gene ID" value="AFUA_4G08070"/>
</dbReference>
<dbReference type="GeneID" id="3508953"/>
<dbReference type="KEGG" id="afm:AFUA_4G08070"/>
<dbReference type="VEuPathDB" id="FungiDB:Afu4g08070"/>
<dbReference type="eggNOG" id="KOG2779">
    <property type="taxonomic scope" value="Eukaryota"/>
</dbReference>
<dbReference type="HOGENOM" id="CLU_022882_2_0_1"/>
<dbReference type="InParanoid" id="Q9UVX3"/>
<dbReference type="OMA" id="GWKRDWH"/>
<dbReference type="OrthoDB" id="60315at2759"/>
<dbReference type="BRENDA" id="2.3.1.97">
    <property type="organism ID" value="508"/>
</dbReference>
<dbReference type="EvolutionaryTrace" id="Q9UVX3"/>
<dbReference type="Proteomes" id="UP000002530">
    <property type="component" value="Chromosome 4"/>
</dbReference>
<dbReference type="GO" id="GO:0005829">
    <property type="term" value="C:cytosol"/>
    <property type="evidence" value="ECO:0000318"/>
    <property type="project" value="GO_Central"/>
</dbReference>
<dbReference type="GO" id="GO:0004379">
    <property type="term" value="F:glycylpeptide N-tetradecanoyltransferase activity"/>
    <property type="evidence" value="ECO:0000318"/>
    <property type="project" value="GO_Central"/>
</dbReference>
<dbReference type="GO" id="GO:0072657">
    <property type="term" value="P:protein localization to membrane"/>
    <property type="evidence" value="ECO:0000318"/>
    <property type="project" value="GO_Central"/>
</dbReference>
<dbReference type="FunFam" id="3.40.630.30:FF:000042">
    <property type="entry name" value="Glycylpeptide N-tetradecanoyltransferase"/>
    <property type="match status" value="1"/>
</dbReference>
<dbReference type="FunFam" id="3.40.630.30:FF:000056">
    <property type="entry name" value="Glycylpeptide N-tetradecanoyltransferase"/>
    <property type="match status" value="1"/>
</dbReference>
<dbReference type="Gene3D" id="3.40.630.30">
    <property type="match status" value="2"/>
</dbReference>
<dbReference type="InterPro" id="IPR016181">
    <property type="entry name" value="Acyl_CoA_acyltransferase"/>
</dbReference>
<dbReference type="InterPro" id="IPR000903">
    <property type="entry name" value="NMT"/>
</dbReference>
<dbReference type="InterPro" id="IPR022677">
    <property type="entry name" value="NMT_C"/>
</dbReference>
<dbReference type="InterPro" id="IPR022678">
    <property type="entry name" value="NMT_CS"/>
</dbReference>
<dbReference type="InterPro" id="IPR022676">
    <property type="entry name" value="NMT_N"/>
</dbReference>
<dbReference type="PANTHER" id="PTHR11377:SF5">
    <property type="entry name" value="GLYCYLPEPTIDE N-TETRADECANOYLTRANSFERASE"/>
    <property type="match status" value="1"/>
</dbReference>
<dbReference type="PANTHER" id="PTHR11377">
    <property type="entry name" value="N-MYRISTOYL TRANSFERASE"/>
    <property type="match status" value="1"/>
</dbReference>
<dbReference type="Pfam" id="PF01233">
    <property type="entry name" value="NMT"/>
    <property type="match status" value="1"/>
</dbReference>
<dbReference type="Pfam" id="PF02799">
    <property type="entry name" value="NMT_C"/>
    <property type="match status" value="1"/>
</dbReference>
<dbReference type="PIRSF" id="PIRSF015892">
    <property type="entry name" value="N-myristl_transf"/>
    <property type="match status" value="1"/>
</dbReference>
<dbReference type="SUPFAM" id="SSF55729">
    <property type="entry name" value="Acyl-CoA N-acyltransferases (Nat)"/>
    <property type="match status" value="2"/>
</dbReference>
<dbReference type="PROSITE" id="PS00975">
    <property type="entry name" value="NMT_1"/>
    <property type="match status" value="1"/>
</dbReference>
<dbReference type="PROSITE" id="PS00976">
    <property type="entry name" value="NMT_2"/>
    <property type="match status" value="1"/>
</dbReference>
<gene>
    <name type="primary">nmt1</name>
    <name type="ORF">AFUA_4G08070</name>
</gene>